<gene>
    <name evidence="1" type="primary">GPR89</name>
    <name type="synonym">GPHR</name>
</gene>
<comment type="function">
    <text evidence="2 4">Voltage-gated channel that enables the transfer of anions such as iodide, chloride, bromide and fluoride which may function in counter-ion conductance and participates in Golgi acidification (PubMed:18794847). Plays a role in lymphocyte development, probably by acting as a RABL3 effector in hematopoietic cells (By similarity).</text>
</comment>
<comment type="catalytic activity">
    <reaction evidence="1">
        <text>iodide(out) = iodide(in)</text>
        <dbReference type="Rhea" id="RHEA:66324"/>
        <dbReference type="ChEBI" id="CHEBI:16382"/>
    </reaction>
</comment>
<comment type="catalytic activity">
    <reaction evidence="1">
        <text>chloride(in) = chloride(out)</text>
        <dbReference type="Rhea" id="RHEA:29823"/>
        <dbReference type="ChEBI" id="CHEBI:17996"/>
    </reaction>
</comment>
<comment type="catalytic activity">
    <reaction evidence="1">
        <text>bromide(in) = bromide(out)</text>
        <dbReference type="Rhea" id="RHEA:75383"/>
        <dbReference type="ChEBI" id="CHEBI:15858"/>
    </reaction>
</comment>
<comment type="catalytic activity">
    <reaction evidence="1">
        <text>fluoride(in) = fluoride(out)</text>
        <dbReference type="Rhea" id="RHEA:76159"/>
        <dbReference type="ChEBI" id="CHEBI:17051"/>
    </reaction>
</comment>
<comment type="subunit">
    <text evidence="1 2">Homotrimer (By similarity). Interacts with RABL3; the interaction stabilizes GPR89B (By similarity).</text>
</comment>
<comment type="subcellular location">
    <subcellularLocation>
        <location evidence="1">Golgi apparatus membrane</location>
        <topology evidence="3">Multi-pass membrane protein</topology>
    </subcellularLocation>
</comment>
<comment type="disruption phenotype">
    <text evidence="4">Delayed transport of newly synthesized protein from the Golgi to the plasma membrane, impaired glycosylation of proteins along the exocytic pathway, and structural disorganization of the Golgi apparatus. Defects are associated with decreased acidification of the cisternae of the Golgi and trans-Golgi network by 0.4-0.5 pH units with no effect on lysosomal pH and no effect on endocytosis or recycling.</text>
</comment>
<comment type="similarity">
    <text evidence="5">Belongs to the Golgi pH regulator (TC 1.A.38) family.</text>
</comment>
<dbReference type="EMBL" id="AB362891">
    <property type="protein sequence ID" value="BAG41890.1"/>
    <property type="molecule type" value="mRNA"/>
</dbReference>
<dbReference type="RefSeq" id="NP_001233742.1">
    <property type="nucleotide sequence ID" value="NM_001246813.1"/>
</dbReference>
<dbReference type="SMR" id="B2ZXD5"/>
<dbReference type="TCDB" id="1.A.38.1.1">
    <property type="family name" value="the golgi ph regulator (gphr) family"/>
</dbReference>
<dbReference type="GlyCosmos" id="B2ZXD5">
    <property type="glycosylation" value="2 sites, No reported glycans"/>
</dbReference>
<dbReference type="PaxDb" id="10029-NP_001233742.1"/>
<dbReference type="GeneID" id="100689387"/>
<dbReference type="KEGG" id="cge:100689387"/>
<dbReference type="CTD" id="36682"/>
<dbReference type="eggNOG" id="KOG2417">
    <property type="taxonomic scope" value="Eukaryota"/>
</dbReference>
<dbReference type="OrthoDB" id="264392at2759"/>
<dbReference type="Proteomes" id="UP000694386">
    <property type="component" value="Unplaced"/>
</dbReference>
<dbReference type="Proteomes" id="UP001108280">
    <property type="component" value="Chromosome 1"/>
</dbReference>
<dbReference type="GO" id="GO:0032580">
    <property type="term" value="C:Golgi cisterna membrane"/>
    <property type="evidence" value="ECO:0000314"/>
    <property type="project" value="UniProtKB"/>
</dbReference>
<dbReference type="GO" id="GO:0000139">
    <property type="term" value="C:Golgi membrane"/>
    <property type="evidence" value="ECO:0007669"/>
    <property type="project" value="UniProtKB-SubCell"/>
</dbReference>
<dbReference type="GO" id="GO:0034702">
    <property type="term" value="C:monoatomic ion channel complex"/>
    <property type="evidence" value="ECO:0007669"/>
    <property type="project" value="UniProtKB-KW"/>
</dbReference>
<dbReference type="GO" id="GO:0008308">
    <property type="term" value="F:voltage-gated monoatomic anion channel activity"/>
    <property type="evidence" value="ECO:0000250"/>
    <property type="project" value="UniProtKB"/>
</dbReference>
<dbReference type="GO" id="GO:0051452">
    <property type="term" value="P:intracellular pH reduction"/>
    <property type="evidence" value="ECO:0000314"/>
    <property type="project" value="UniProtKB"/>
</dbReference>
<dbReference type="GO" id="GO:0015031">
    <property type="term" value="P:protein transport"/>
    <property type="evidence" value="ECO:0007669"/>
    <property type="project" value="UniProtKB-KW"/>
</dbReference>
<dbReference type="GO" id="GO:0030217">
    <property type="term" value="P:T cell differentiation"/>
    <property type="evidence" value="ECO:0000250"/>
    <property type="project" value="UniProtKB"/>
</dbReference>
<dbReference type="InterPro" id="IPR025969">
    <property type="entry name" value="ABA_GPCR_dom"/>
</dbReference>
<dbReference type="InterPro" id="IPR022535">
    <property type="entry name" value="Golgi_pH-regulator_cons_dom"/>
</dbReference>
<dbReference type="InterPro" id="IPR015672">
    <property type="entry name" value="GPHR/GTG"/>
</dbReference>
<dbReference type="PANTHER" id="PTHR15948">
    <property type="entry name" value="G-PROTEIN COUPLED RECEPTOR 89-RELATED"/>
    <property type="match status" value="1"/>
</dbReference>
<dbReference type="PANTHER" id="PTHR15948:SF0">
    <property type="entry name" value="GOLGI PH REGULATOR A-RELATED"/>
    <property type="match status" value="1"/>
</dbReference>
<dbReference type="Pfam" id="PF12430">
    <property type="entry name" value="ABA_GPCR"/>
    <property type="match status" value="1"/>
</dbReference>
<dbReference type="Pfam" id="PF12537">
    <property type="entry name" value="GPHR_N"/>
    <property type="match status" value="1"/>
</dbReference>
<protein>
    <recommendedName>
        <fullName evidence="1">Golgi pH regulator</fullName>
    </recommendedName>
    <alternativeName>
        <fullName>Protein GPR89</fullName>
    </alternativeName>
</protein>
<name>GPHR_CRIGR</name>
<proteinExistence type="evidence at transcript level"/>
<accession>B2ZXD5</accession>
<evidence type="ECO:0000250" key="1">
    <source>
        <dbReference type="UniProtKB" id="P0CG08"/>
    </source>
</evidence>
<evidence type="ECO:0000250" key="2">
    <source>
        <dbReference type="UniProtKB" id="Q8BS95"/>
    </source>
</evidence>
<evidence type="ECO:0000255" key="3"/>
<evidence type="ECO:0000269" key="4">
    <source>
    </source>
</evidence>
<evidence type="ECO:0000305" key="5"/>
<organism>
    <name type="scientific">Cricetulus griseus</name>
    <name type="common">Chinese hamster</name>
    <name type="synonym">Cricetulus barabensis griseus</name>
    <dbReference type="NCBI Taxonomy" id="10029"/>
    <lineage>
        <taxon>Eukaryota</taxon>
        <taxon>Metazoa</taxon>
        <taxon>Chordata</taxon>
        <taxon>Craniata</taxon>
        <taxon>Vertebrata</taxon>
        <taxon>Euteleostomi</taxon>
        <taxon>Mammalia</taxon>
        <taxon>Eutheria</taxon>
        <taxon>Euarchontoglires</taxon>
        <taxon>Glires</taxon>
        <taxon>Rodentia</taxon>
        <taxon>Myomorpha</taxon>
        <taxon>Muroidea</taxon>
        <taxon>Cricetidae</taxon>
        <taxon>Cricetinae</taxon>
        <taxon>Cricetulus</taxon>
    </lineage>
</organism>
<reference key="1">
    <citation type="journal article" date="2008" name="Nat. Cell Biol.">
        <title>GPHR is a novel anion channel critical for acidification and functions of the Golgi apparatus.</title>
        <authorList>
            <person name="Maeda Y."/>
            <person name="Ide T."/>
            <person name="Koike M."/>
            <person name="Uchiyama Y."/>
            <person name="Kinoshita T."/>
        </authorList>
    </citation>
    <scope>NUCLEOTIDE SEQUENCE [MRNA]</scope>
    <scope>FUNCTION</scope>
    <scope>DISRUPTION PHENOTYPE</scope>
</reference>
<feature type="chain" id="PRO_0000395005" description="Golgi pH regulator">
    <location>
        <begin position="1"/>
        <end position="455"/>
    </location>
</feature>
<feature type="transmembrane region" description="Helical" evidence="3">
    <location>
        <begin position="5"/>
        <end position="25"/>
    </location>
</feature>
<feature type="transmembrane region" description="Helical" evidence="3">
    <location>
        <begin position="46"/>
        <end position="66"/>
    </location>
</feature>
<feature type="transmembrane region" description="Helical" evidence="3">
    <location>
        <begin position="79"/>
        <end position="99"/>
    </location>
</feature>
<feature type="transmembrane region" description="Helical" evidence="3">
    <location>
        <begin position="114"/>
        <end position="134"/>
    </location>
</feature>
<feature type="transmembrane region" description="Helical" evidence="3">
    <location>
        <begin position="150"/>
        <end position="170"/>
    </location>
</feature>
<feature type="transmembrane region" description="Helical" evidence="3">
    <location>
        <begin position="290"/>
        <end position="310"/>
    </location>
</feature>
<feature type="transmembrane region" description="Helical" evidence="3">
    <location>
        <begin position="343"/>
        <end position="363"/>
    </location>
</feature>
<feature type="transmembrane region" description="Helical" evidence="3">
    <location>
        <begin position="378"/>
        <end position="398"/>
    </location>
</feature>
<feature type="transmembrane region" description="Helical" evidence="3">
    <location>
        <begin position="425"/>
        <end position="445"/>
    </location>
</feature>
<feature type="glycosylation site" description="N-linked (GlcNAc...) asparagine" evidence="3">
    <location>
        <position position="180"/>
    </location>
</feature>
<feature type="glycosylation site" description="N-linked (GlcNAc...) asparagine" evidence="3">
    <location>
        <position position="243"/>
    </location>
</feature>
<keyword id="KW-0325">Glycoprotein</keyword>
<keyword id="KW-0333">Golgi apparatus</keyword>
<keyword id="KW-0407">Ion channel</keyword>
<keyword id="KW-0406">Ion transport</keyword>
<keyword id="KW-0472">Membrane</keyword>
<keyword id="KW-0653">Protein transport</keyword>
<keyword id="KW-0812">Transmembrane</keyword>
<keyword id="KW-1133">Transmembrane helix</keyword>
<keyword id="KW-0813">Transport</keyword>
<keyword id="KW-0851">Voltage-gated channel</keyword>
<sequence>MSFLIDSSIMVTSQILFFGFGWLFFMRQLFKDYEVRQYVVQVIFSVTFAFSCTMFELIIFEILGVLNSSSRYFHWKMNLCVILLILVFMVPFYIGYFIVSNIQLLHKQRLLFSCLLWLTFMYFFWKLGDPFPILSPKHGILSIEQLISRVGVIGVTLMALLSGFGAVNCPYTYMSYFLRNVTDTDILALERRLLQTMDMIISKKKRMAVARRTMFQRGEVQNKPSGLWGMLKSVTASAPGSENLTLIQQEVDALEELSRQLFLETADLYATKERIEYSKTFKGKYFNFLGYFFSIYCVWKIFMATINIVLDRVGKTDPVTRGIEITVNYLGIQFDVKFWSQHISFILVGIIIVSSIRGLLITLTKFFYAISSSKSSNVIVLLLAQIMGMYFVSSVLLIRMSMPPEYRTIITQVLGELQFNFYHRWFDVIFLVSALSSILFLYLAHKQAPEKHMAP</sequence>